<reference key="1">
    <citation type="journal article" date="2008" name="PLoS ONE">
        <title>Survival in nuclear waste, extreme resistance, and potential applications gleaned from the genome sequence of Kineococcus radiotolerans SRS30216.</title>
        <authorList>
            <person name="Bagwell C.E."/>
            <person name="Bhat S."/>
            <person name="Hawkins G.M."/>
            <person name="Smith B.W."/>
            <person name="Biswas T."/>
            <person name="Hoover T.R."/>
            <person name="Saunders E."/>
            <person name="Han C.S."/>
            <person name="Tsodikov O.V."/>
            <person name="Shimkets L.J."/>
        </authorList>
    </citation>
    <scope>NUCLEOTIDE SEQUENCE [LARGE SCALE GENOMIC DNA]</scope>
    <source>
        <strain>ATCC BAA-149 / DSM 14245 / SRS30216</strain>
    </source>
</reference>
<organism>
    <name type="scientific">Kineococcus radiotolerans (strain ATCC BAA-149 / DSM 14245 / SRS30216)</name>
    <dbReference type="NCBI Taxonomy" id="266940"/>
    <lineage>
        <taxon>Bacteria</taxon>
        <taxon>Bacillati</taxon>
        <taxon>Actinomycetota</taxon>
        <taxon>Actinomycetes</taxon>
        <taxon>Kineosporiales</taxon>
        <taxon>Kineosporiaceae</taxon>
        <taxon>Kineococcus</taxon>
    </lineage>
</organism>
<keyword id="KW-0963">Cytoplasm</keyword>
<keyword id="KW-0378">Hydrolase</keyword>
<keyword id="KW-0540">Nuclease</keyword>
<keyword id="KW-1185">Reference proteome</keyword>
<keyword id="KW-0690">Ribosome biogenesis</keyword>
<name>YQGF_KINRD</name>
<feature type="chain" id="PRO_1000131041" description="Putative pre-16S rRNA nuclease">
    <location>
        <begin position="1"/>
        <end position="188"/>
    </location>
</feature>
<feature type="region of interest" description="Disordered" evidence="2">
    <location>
        <begin position="144"/>
        <end position="188"/>
    </location>
</feature>
<feature type="compositionally biased region" description="Basic residues" evidence="2">
    <location>
        <begin position="154"/>
        <end position="163"/>
    </location>
</feature>
<proteinExistence type="inferred from homology"/>
<protein>
    <recommendedName>
        <fullName evidence="1">Putative pre-16S rRNA nuclease</fullName>
        <ecNumber evidence="1">3.1.-.-</ecNumber>
    </recommendedName>
</protein>
<evidence type="ECO:0000255" key="1">
    <source>
        <dbReference type="HAMAP-Rule" id="MF_00651"/>
    </source>
</evidence>
<evidence type="ECO:0000256" key="2">
    <source>
        <dbReference type="SAM" id="MobiDB-lite"/>
    </source>
</evidence>
<gene>
    <name type="ordered locus">Krad_3031</name>
</gene>
<accession>A6WCF6</accession>
<sequence>MRPGVRLAVDVGSVRVGLAACDPAGVIASPVRTLVRDPGHDADVAEIAAEARARGAVEIVLGLPLSLDGSEGPAALRALDYADKIVRSVPEVPVRLVDERLSTVGAHRALHAAGLKEKQFRAVVDQAAAVVLLQATLDAERTGHAPGRVVAGPKGRRKARHRGQGGTGTEQQADAGGRARPHATEGKG</sequence>
<comment type="function">
    <text evidence="1">Could be a nuclease involved in processing of the 5'-end of pre-16S rRNA.</text>
</comment>
<comment type="subcellular location">
    <subcellularLocation>
        <location evidence="1">Cytoplasm</location>
    </subcellularLocation>
</comment>
<comment type="similarity">
    <text evidence="1">Belongs to the YqgF nuclease family.</text>
</comment>
<dbReference type="EC" id="3.1.-.-" evidence="1"/>
<dbReference type="EMBL" id="CP000750">
    <property type="protein sequence ID" value="ABS04495.1"/>
    <property type="molecule type" value="Genomic_DNA"/>
</dbReference>
<dbReference type="RefSeq" id="WP_012087257.1">
    <property type="nucleotide sequence ID" value="NC_009664.2"/>
</dbReference>
<dbReference type="SMR" id="A6WCF6"/>
<dbReference type="STRING" id="266940.Krad_3031"/>
<dbReference type="KEGG" id="kra:Krad_3031"/>
<dbReference type="eggNOG" id="COG0816">
    <property type="taxonomic scope" value="Bacteria"/>
</dbReference>
<dbReference type="HOGENOM" id="CLU_098240_0_1_11"/>
<dbReference type="OrthoDB" id="9790539at2"/>
<dbReference type="Proteomes" id="UP000001116">
    <property type="component" value="Chromosome"/>
</dbReference>
<dbReference type="GO" id="GO:0005829">
    <property type="term" value="C:cytosol"/>
    <property type="evidence" value="ECO:0007669"/>
    <property type="project" value="TreeGrafter"/>
</dbReference>
<dbReference type="GO" id="GO:0004518">
    <property type="term" value="F:nuclease activity"/>
    <property type="evidence" value="ECO:0007669"/>
    <property type="project" value="UniProtKB-KW"/>
</dbReference>
<dbReference type="GO" id="GO:0000967">
    <property type="term" value="P:rRNA 5'-end processing"/>
    <property type="evidence" value="ECO:0007669"/>
    <property type="project" value="UniProtKB-UniRule"/>
</dbReference>
<dbReference type="CDD" id="cd16964">
    <property type="entry name" value="YqgF"/>
    <property type="match status" value="1"/>
</dbReference>
<dbReference type="Gene3D" id="3.30.420.140">
    <property type="entry name" value="YqgF/RNase H-like domain"/>
    <property type="match status" value="1"/>
</dbReference>
<dbReference type="HAMAP" id="MF_00651">
    <property type="entry name" value="Nuclease_YqgF"/>
    <property type="match status" value="1"/>
</dbReference>
<dbReference type="InterPro" id="IPR012337">
    <property type="entry name" value="RNaseH-like_sf"/>
</dbReference>
<dbReference type="InterPro" id="IPR005227">
    <property type="entry name" value="YqgF"/>
</dbReference>
<dbReference type="InterPro" id="IPR006641">
    <property type="entry name" value="YqgF/RNaseH-like_dom"/>
</dbReference>
<dbReference type="InterPro" id="IPR037027">
    <property type="entry name" value="YqgF/RNaseH-like_dom_sf"/>
</dbReference>
<dbReference type="NCBIfam" id="TIGR00250">
    <property type="entry name" value="RNAse_H_YqgF"/>
    <property type="match status" value="1"/>
</dbReference>
<dbReference type="PANTHER" id="PTHR33317">
    <property type="entry name" value="POLYNUCLEOTIDYL TRANSFERASE, RIBONUCLEASE H-LIKE SUPERFAMILY PROTEIN"/>
    <property type="match status" value="1"/>
</dbReference>
<dbReference type="PANTHER" id="PTHR33317:SF4">
    <property type="entry name" value="POLYNUCLEOTIDYL TRANSFERASE, RIBONUCLEASE H-LIKE SUPERFAMILY PROTEIN"/>
    <property type="match status" value="1"/>
</dbReference>
<dbReference type="Pfam" id="PF03652">
    <property type="entry name" value="RuvX"/>
    <property type="match status" value="1"/>
</dbReference>
<dbReference type="SMART" id="SM00732">
    <property type="entry name" value="YqgFc"/>
    <property type="match status" value="1"/>
</dbReference>
<dbReference type="SUPFAM" id="SSF53098">
    <property type="entry name" value="Ribonuclease H-like"/>
    <property type="match status" value="1"/>
</dbReference>